<name>MAFA_XENTR</name>
<feature type="chain" id="PRO_0000320279" description="Transcription factor MafA">
    <location>
        <begin position="1"/>
        <end position="289"/>
    </location>
</feature>
<feature type="domain" description="bZIP" evidence="1">
    <location>
        <begin position="201"/>
        <end position="264"/>
    </location>
</feature>
<feature type="region of interest" description="Disordered" evidence="2">
    <location>
        <begin position="52"/>
        <end position="87"/>
    </location>
</feature>
<feature type="region of interest" description="Disordered" evidence="2">
    <location>
        <begin position="126"/>
        <end position="164"/>
    </location>
</feature>
<feature type="region of interest" description="Basic motif">
    <location>
        <begin position="201"/>
        <end position="226"/>
    </location>
</feature>
<feature type="region of interest" description="Leucine-zipper">
    <location>
        <begin position="229"/>
        <end position="250"/>
    </location>
</feature>
<feature type="region of interest" description="Disordered" evidence="2">
    <location>
        <begin position="266"/>
        <end position="289"/>
    </location>
</feature>
<feature type="compositionally biased region" description="Low complexity" evidence="2">
    <location>
        <begin position="52"/>
        <end position="73"/>
    </location>
</feature>
<feature type="compositionally biased region" description="Polar residues" evidence="2">
    <location>
        <begin position="74"/>
        <end position="87"/>
    </location>
</feature>
<feature type="compositionally biased region" description="Basic residues" evidence="2">
    <location>
        <begin position="152"/>
        <end position="164"/>
    </location>
</feature>
<feature type="compositionally biased region" description="Polar residues" evidence="2">
    <location>
        <begin position="267"/>
        <end position="276"/>
    </location>
</feature>
<evidence type="ECO:0000255" key="1">
    <source>
        <dbReference type="PROSITE-ProRule" id="PRU00978"/>
    </source>
</evidence>
<evidence type="ECO:0000256" key="2">
    <source>
        <dbReference type="SAM" id="MobiDB-lite"/>
    </source>
</evidence>
<evidence type="ECO:0000269" key="3">
    <source>
    </source>
</evidence>
<evidence type="ECO:0000305" key="4"/>
<keyword id="KW-0217">Developmental protein</keyword>
<keyword id="KW-0238">DNA-binding</keyword>
<keyword id="KW-0539">Nucleus</keyword>
<keyword id="KW-1185">Reference proteome</keyword>
<keyword id="KW-0804">Transcription</keyword>
<keyword id="KW-0805">Transcription regulation</keyword>
<comment type="function">
    <text evidence="4">Transcription factor, possibly involved in transcription regulation during lens development.</text>
</comment>
<comment type="subcellular location">
    <subcellularLocation>
        <location evidence="1">Nucleus</location>
    </subcellularLocation>
</comment>
<comment type="developmental stage">
    <text evidence="3">During embryonic development, expressed in somites. First detected in stage 24 and remains excluded from the 2-3 caudal-most somites at all studied stages. First detectable in the developing hindbrain at stage 24. Expressed persists until stage 33. At stage 43, expressed in the olfactory bulb and thalamus.</text>
</comment>
<comment type="similarity">
    <text evidence="4">Belongs to the bZIP family. Maf subfamily.</text>
</comment>
<accession>Q4U1U2</accession>
<dbReference type="EMBL" id="DQ018730">
    <property type="protein sequence ID" value="AAY41823.1"/>
    <property type="molecule type" value="mRNA"/>
</dbReference>
<dbReference type="RefSeq" id="NP_001027475.1">
    <property type="nucleotide sequence ID" value="NM_001032304.1"/>
</dbReference>
<dbReference type="SMR" id="Q4U1U2"/>
<dbReference type="FunCoup" id="Q4U1U2">
    <property type="interactions" value="804"/>
</dbReference>
<dbReference type="STRING" id="8364.ENSXETP00000030440"/>
<dbReference type="PaxDb" id="8364-ENSXETP00000062405"/>
<dbReference type="GeneID" id="613050"/>
<dbReference type="KEGG" id="xtr:613050"/>
<dbReference type="AGR" id="Xenbase:XB-GENE-6086265"/>
<dbReference type="CTD" id="389692"/>
<dbReference type="Xenbase" id="XB-GENE-6086265">
    <property type="gene designation" value="mafa"/>
</dbReference>
<dbReference type="eggNOG" id="KOG4196">
    <property type="taxonomic scope" value="Eukaryota"/>
</dbReference>
<dbReference type="InParanoid" id="Q4U1U2"/>
<dbReference type="OMA" id="SYQHHLN"/>
<dbReference type="OrthoDB" id="5974330at2759"/>
<dbReference type="Proteomes" id="UP000008143">
    <property type="component" value="Chromosome 6"/>
</dbReference>
<dbReference type="GO" id="GO:0005634">
    <property type="term" value="C:nucleus"/>
    <property type="evidence" value="ECO:0007669"/>
    <property type="project" value="UniProtKB-SubCell"/>
</dbReference>
<dbReference type="GO" id="GO:0003677">
    <property type="term" value="F:DNA binding"/>
    <property type="evidence" value="ECO:0007669"/>
    <property type="project" value="UniProtKB-KW"/>
</dbReference>
<dbReference type="GO" id="GO:0003700">
    <property type="term" value="F:DNA-binding transcription factor activity"/>
    <property type="evidence" value="ECO:0007669"/>
    <property type="project" value="InterPro"/>
</dbReference>
<dbReference type="CDD" id="cd14718">
    <property type="entry name" value="bZIP_Maf_large"/>
    <property type="match status" value="1"/>
</dbReference>
<dbReference type="FunFam" id="1.20.5.170:FF:000016">
    <property type="entry name" value="MAF bZIP transcription factor"/>
    <property type="match status" value="1"/>
</dbReference>
<dbReference type="Gene3D" id="1.20.5.170">
    <property type="match status" value="1"/>
</dbReference>
<dbReference type="InterPro" id="IPR004827">
    <property type="entry name" value="bZIP"/>
</dbReference>
<dbReference type="InterPro" id="IPR004826">
    <property type="entry name" value="bZIP_Maf"/>
</dbReference>
<dbReference type="InterPro" id="IPR046347">
    <property type="entry name" value="bZIP_sf"/>
</dbReference>
<dbReference type="InterPro" id="IPR013592">
    <property type="entry name" value="Maf_TF_N"/>
</dbReference>
<dbReference type="InterPro" id="IPR008917">
    <property type="entry name" value="TF_DNA-bd_sf"/>
</dbReference>
<dbReference type="InterPro" id="IPR024874">
    <property type="entry name" value="Transcription_factor_Maf_fam"/>
</dbReference>
<dbReference type="PANTHER" id="PTHR10129">
    <property type="entry name" value="TRANSCRIPTION FACTOR MAF"/>
    <property type="match status" value="1"/>
</dbReference>
<dbReference type="PANTHER" id="PTHR10129:SF30">
    <property type="entry name" value="TRANSCRIPTION FACTOR MAFA"/>
    <property type="match status" value="1"/>
</dbReference>
<dbReference type="Pfam" id="PF03131">
    <property type="entry name" value="bZIP_Maf"/>
    <property type="match status" value="1"/>
</dbReference>
<dbReference type="Pfam" id="PF08383">
    <property type="entry name" value="Maf_N"/>
    <property type="match status" value="1"/>
</dbReference>
<dbReference type="SMART" id="SM00338">
    <property type="entry name" value="BRLZ"/>
    <property type="match status" value="1"/>
</dbReference>
<dbReference type="SUPFAM" id="SSF47454">
    <property type="entry name" value="A DNA-binding domain in eukaryotic transcription factors"/>
    <property type="match status" value="1"/>
</dbReference>
<dbReference type="SUPFAM" id="SSF57959">
    <property type="entry name" value="Leucine zipper domain"/>
    <property type="match status" value="1"/>
</dbReference>
<dbReference type="PROSITE" id="PS50217">
    <property type="entry name" value="BZIP"/>
    <property type="match status" value="1"/>
</dbReference>
<proteinExistence type="evidence at transcript level"/>
<gene>
    <name type="primary">mafa</name>
</gene>
<sequence length="289" mass="33146">MASDLAMSAELPNSPLAIEYVNDFDLMKFEVKKEPPEAERFCHRLPPGSLSSTPISTPCSSVPSSPSFCAPSPGAQSGVNPSNPNAANKPQLEDLYWMSNYQHHINPEALNLTPEDAVEALIGNPHHHHHHHQGYDGFRGQQYPGDEMAPSGHHHQVHHHHHHHNHHLRLEDRFSDEQLVSMSVRELNRQLRGFSKEEVIRLKQKRRTLKNRGYAQSCRYKRVQQRHILETEKCQLQSQVEQLKQEVSRLAKERDLYKDKYEKLASRSFTTRESPPQGNPGKANADFFM</sequence>
<protein>
    <recommendedName>
        <fullName>Transcription factor MafA</fullName>
    </recommendedName>
</protein>
<reference key="1">
    <citation type="journal article" date="2005" name="Dev. Genes Evol.">
        <title>Phylogenomic analysis and expression patterns of large Maf genes in Xenopus tropicalis provide new insights into the functional evolution of the gene family in osteichthyans.</title>
        <authorList>
            <person name="Coolen M."/>
            <person name="Sii-Felice K."/>
            <person name="Bronchain O."/>
            <person name="Mazabraud A."/>
            <person name="Bourrat F."/>
            <person name="Retaux S."/>
            <person name="Felder-Schmittbuhl M.-P."/>
            <person name="Mazan S."/>
            <person name="Plouhinec J.-L."/>
        </authorList>
    </citation>
    <scope>NUCLEOTIDE SEQUENCE [MRNA]</scope>
    <scope>DEVELOPMENTAL STAGE</scope>
</reference>
<organism>
    <name type="scientific">Xenopus tropicalis</name>
    <name type="common">Western clawed frog</name>
    <name type="synonym">Silurana tropicalis</name>
    <dbReference type="NCBI Taxonomy" id="8364"/>
    <lineage>
        <taxon>Eukaryota</taxon>
        <taxon>Metazoa</taxon>
        <taxon>Chordata</taxon>
        <taxon>Craniata</taxon>
        <taxon>Vertebrata</taxon>
        <taxon>Euteleostomi</taxon>
        <taxon>Amphibia</taxon>
        <taxon>Batrachia</taxon>
        <taxon>Anura</taxon>
        <taxon>Pipoidea</taxon>
        <taxon>Pipidae</taxon>
        <taxon>Xenopodinae</taxon>
        <taxon>Xenopus</taxon>
        <taxon>Silurana</taxon>
    </lineage>
</organism>